<keyword id="KW-0066">ATP synthesis</keyword>
<keyword id="KW-0375">Hydrogen ion transport</keyword>
<keyword id="KW-0406">Ion transport</keyword>
<keyword id="KW-1185">Reference proteome</keyword>
<keyword id="KW-0813">Transport</keyword>
<dbReference type="EMBL" id="AE001273">
    <property type="protein sequence ID" value="AAC67903.1"/>
    <property type="molecule type" value="Genomic_DNA"/>
</dbReference>
<dbReference type="PIR" id="D71531">
    <property type="entry name" value="D71531"/>
</dbReference>
<dbReference type="RefSeq" id="NP_219815.1">
    <property type="nucleotide sequence ID" value="NC_000117.1"/>
</dbReference>
<dbReference type="RefSeq" id="WP_010725155.1">
    <property type="nucleotide sequence ID" value="NC_000117.1"/>
</dbReference>
<dbReference type="SMR" id="O84312"/>
<dbReference type="STRING" id="272561.CT_310"/>
<dbReference type="EnsemblBacteria" id="AAC67903">
    <property type="protein sequence ID" value="AAC67903"/>
    <property type="gene ID" value="CT_310"/>
</dbReference>
<dbReference type="GeneID" id="884815"/>
<dbReference type="KEGG" id="ctr:CT_310"/>
<dbReference type="PATRIC" id="fig|272561.5.peg.332"/>
<dbReference type="HOGENOM" id="CLU_1314973_0_0_0"/>
<dbReference type="InParanoid" id="O84312"/>
<dbReference type="OrthoDB" id="21003at2"/>
<dbReference type="Proteomes" id="UP000000431">
    <property type="component" value="Chromosome"/>
</dbReference>
<dbReference type="GO" id="GO:0033178">
    <property type="term" value="C:proton-transporting two-sector ATPase complex, catalytic domain"/>
    <property type="evidence" value="ECO:0007669"/>
    <property type="project" value="InterPro"/>
</dbReference>
<dbReference type="GO" id="GO:0005524">
    <property type="term" value="F:ATP binding"/>
    <property type="evidence" value="ECO:0007669"/>
    <property type="project" value="UniProtKB-UniRule"/>
</dbReference>
<dbReference type="GO" id="GO:0046933">
    <property type="term" value="F:proton-transporting ATP synthase activity, rotational mechanism"/>
    <property type="evidence" value="ECO:0007669"/>
    <property type="project" value="UniProtKB-UniRule"/>
</dbReference>
<dbReference type="GO" id="GO:0046961">
    <property type="term" value="F:proton-transporting ATPase activity, rotational mechanism"/>
    <property type="evidence" value="ECO:0007669"/>
    <property type="project" value="InterPro"/>
</dbReference>
<dbReference type="GO" id="GO:0042777">
    <property type="term" value="P:proton motive force-driven plasma membrane ATP synthesis"/>
    <property type="evidence" value="ECO:0007669"/>
    <property type="project" value="UniProtKB-UniRule"/>
</dbReference>
<dbReference type="Gene3D" id="1.20.5.2950">
    <property type="match status" value="1"/>
</dbReference>
<dbReference type="HAMAP" id="MF_00311">
    <property type="entry name" value="ATP_synth_E_arch"/>
    <property type="match status" value="1"/>
</dbReference>
<dbReference type="InterPro" id="IPR028987">
    <property type="entry name" value="ATP_synth_B-like_membr_sf"/>
</dbReference>
<dbReference type="InterPro" id="IPR002842">
    <property type="entry name" value="ATPase_V1_Esu"/>
</dbReference>
<dbReference type="InterPro" id="IPR009335">
    <property type="entry name" value="T3SS_HrpE/ATPase_suE"/>
</dbReference>
<dbReference type="NCBIfam" id="NF002170">
    <property type="entry name" value="PRK01005.1"/>
    <property type="match status" value="1"/>
</dbReference>
<dbReference type="Pfam" id="PF06188">
    <property type="entry name" value="HrpE"/>
    <property type="match status" value="1"/>
</dbReference>
<dbReference type="SUPFAM" id="SSF81573">
    <property type="entry name" value="F1F0 ATP synthase subunit B, membrane domain"/>
    <property type="match status" value="1"/>
</dbReference>
<proteinExistence type="inferred from homology"/>
<name>VATE_CHLTR</name>
<reference key="1">
    <citation type="journal article" date="1998" name="Science">
        <title>Genome sequence of an obligate intracellular pathogen of humans: Chlamydia trachomatis.</title>
        <authorList>
            <person name="Stephens R.S."/>
            <person name="Kalman S."/>
            <person name="Lammel C.J."/>
            <person name="Fan J."/>
            <person name="Marathe R."/>
            <person name="Aravind L."/>
            <person name="Mitchell W.P."/>
            <person name="Olinger L."/>
            <person name="Tatusov R.L."/>
            <person name="Zhao Q."/>
            <person name="Koonin E.V."/>
            <person name="Davis R.W."/>
        </authorList>
    </citation>
    <scope>NUCLEOTIDE SEQUENCE [LARGE SCALE GENOMIC DNA]</scope>
    <source>
        <strain>ATCC VR-885 / DSM 19411 / UW-3/Cx</strain>
    </source>
</reference>
<evidence type="ECO:0000250" key="1"/>
<evidence type="ECO:0000305" key="2"/>
<feature type="chain" id="PRO_0000117332" description="V-type ATP synthase subunit E">
    <location>
        <begin position="1"/>
        <end position="208"/>
    </location>
</feature>
<gene>
    <name type="primary">atpE</name>
    <name type="ordered locus">CT_310</name>
</gene>
<accession>O84312</accession>
<organism>
    <name type="scientific">Chlamydia trachomatis serovar D (strain ATCC VR-885 / DSM 19411 / UW-3/Cx)</name>
    <dbReference type="NCBI Taxonomy" id="272561"/>
    <lineage>
        <taxon>Bacteria</taxon>
        <taxon>Pseudomonadati</taxon>
        <taxon>Chlamydiota</taxon>
        <taxon>Chlamydiia</taxon>
        <taxon>Chlamydiales</taxon>
        <taxon>Chlamydiaceae</taxon>
        <taxon>Chlamydia/Chlamydophila group</taxon>
        <taxon>Chlamydia</taxon>
    </lineage>
</organism>
<protein>
    <recommendedName>
        <fullName>V-type ATP synthase subunit E</fullName>
    </recommendedName>
    <alternativeName>
        <fullName>V-ATPase subunit E</fullName>
    </alternativeName>
</protein>
<comment type="function">
    <text evidence="1">Produces ATP from ADP in the presence of a proton gradient across the membrane.</text>
</comment>
<comment type="similarity">
    <text evidence="2">Belongs to the V-ATPase E subunit family.</text>
</comment>
<sequence length="208" mass="22932">MADLSAQDKLKQICDALREETLKPAEEEAGSIVHNAREQAKRIVEEAKEEAQRIIRSAEETADQTLKKGEAALVQAGKRSLENLKQAVETKIFRESLGEWLDHVATDPEVSAKLVQALVQAVDAQGISGNLSAYIGKHVSARAVNEALGKEITSKLKEKGVSVGNFSGGAQLKVEERNWVLDMSSEVLLDLLTRFLQKDFREMIFQSC</sequence>